<comment type="similarity">
    <text evidence="1">Belongs to the coronaviruses ns2a protein family.</text>
</comment>
<protein>
    <recommendedName>
        <fullName>Non-structural protein 2a</fullName>
        <shortName>ns2a</shortName>
    </recommendedName>
    <alternativeName>
        <fullName>32 kDa accessory protein</fullName>
    </alternativeName>
    <alternativeName>
        <fullName>32 kDa non-structural protein</fullName>
    </alternativeName>
    <alternativeName>
        <fullName>ns2</fullName>
    </alternativeName>
</protein>
<evidence type="ECO:0000305" key="1"/>
<sequence>MAVAYADKPNHFINFPLTQFQGFVLNYKGLQFQLLDEGVDCKIQTAPHISLAMLDIQPEDYRSVDVAIQEVIDDMHWGEGFQIKFENPHILGRCIVLDVKGVEELHDDLVNYIRDKGCVDDQSRKWIGHCTIAQLTDAALSIKGNVDFINSMQFNYKITINPSSPARLEIVKLGAEKKDGFYETIASHWMGIRFEYNPPTDKLAMIMGYCCLEVVRKELEEGDLPENDDDAWFKLSYHYENNSWFFRHVYRKSSYFRKSCQNLDCNCLGFYESSVEED</sequence>
<proteinExistence type="inferred from homology"/>
<gene>
    <name type="ORF">2a</name>
</gene>
<dbReference type="EMBL" id="AF391542">
    <property type="protein sequence ID" value="AAL57306.1"/>
    <property type="molecule type" value="Genomic_RNA"/>
</dbReference>
<dbReference type="SMR" id="Q8V438"/>
<dbReference type="Proteomes" id="UP000008571">
    <property type="component" value="Genome"/>
</dbReference>
<dbReference type="Gene3D" id="3.90.1140.10">
    <property type="entry name" value="Cyclic phosphodiesterase"/>
    <property type="match status" value="1"/>
</dbReference>
<dbReference type="InterPro" id="IPR007878">
    <property type="entry name" value="Coronavirus_NS2A"/>
</dbReference>
<dbReference type="InterPro" id="IPR039573">
    <property type="entry name" value="NS2A-like"/>
</dbReference>
<dbReference type="Pfam" id="PF05213">
    <property type="entry name" value="Corona_NS2A"/>
    <property type="match status" value="1"/>
</dbReference>
<dbReference type="PIRSF" id="PIRSF003890">
    <property type="entry name" value="LigT_coronavirus"/>
    <property type="match status" value="1"/>
</dbReference>
<feature type="chain" id="PRO_0000283934" description="Non-structural protein 2a">
    <location>
        <begin position="1"/>
        <end position="278"/>
    </location>
</feature>
<reference key="1">
    <citation type="journal article" date="2001" name="J. Gen. Virol.">
        <title>Comparison of genomic and predicted amino acid sequences of respiratory and enteric bovine coronaviruses isolated from the same animal with fatal shipping pneumonia.</title>
        <authorList>
            <person name="Chouljenko V.N."/>
            <person name="Lin X.Q."/>
            <person name="Storz J."/>
            <person name="Kousoulas K.G."/>
            <person name="Gorbalenya A.E."/>
        </authorList>
    </citation>
    <scope>NUCLEOTIDE SEQUENCE [GENOMIC RNA]</scope>
</reference>
<accession>Q8V438</accession>
<organism>
    <name type="scientific">Bovine coronavirus (strain 98TXSF-110-LUN)</name>
    <name type="common">BCoV-LUN</name>
    <name type="synonym">BCV</name>
    <dbReference type="NCBI Taxonomy" id="233264"/>
    <lineage>
        <taxon>Viruses</taxon>
        <taxon>Riboviria</taxon>
        <taxon>Orthornavirae</taxon>
        <taxon>Pisuviricota</taxon>
        <taxon>Pisoniviricetes</taxon>
        <taxon>Nidovirales</taxon>
        <taxon>Cornidovirineae</taxon>
        <taxon>Coronaviridae</taxon>
        <taxon>Orthocoronavirinae</taxon>
        <taxon>Betacoronavirus</taxon>
        <taxon>Embecovirus</taxon>
        <taxon>Betacoronavirus 1</taxon>
    </lineage>
</organism>
<name>NS2A_CVBLU</name>
<organismHost>
    <name type="scientific">Bos taurus</name>
    <name type="common">Bovine</name>
    <dbReference type="NCBI Taxonomy" id="9913"/>
</organismHost>